<comment type="function">
    <text evidence="1">Catalyzes the phospholipid dependent N-acylation of the N-terminal cysteine of apolipoprotein, the last step in lipoprotein maturation.</text>
</comment>
<comment type="catalytic activity">
    <reaction evidence="1">
        <text>N-terminal S-1,2-diacyl-sn-glyceryl-L-cysteinyl-[lipoprotein] + a glycerophospholipid = N-acyl-S-1,2-diacyl-sn-glyceryl-L-cysteinyl-[lipoprotein] + a 2-acyl-sn-glycero-3-phospholipid + H(+)</text>
        <dbReference type="Rhea" id="RHEA:48228"/>
        <dbReference type="Rhea" id="RHEA-COMP:14681"/>
        <dbReference type="Rhea" id="RHEA-COMP:14684"/>
        <dbReference type="ChEBI" id="CHEBI:15378"/>
        <dbReference type="ChEBI" id="CHEBI:136912"/>
        <dbReference type="ChEBI" id="CHEBI:140656"/>
        <dbReference type="ChEBI" id="CHEBI:140657"/>
        <dbReference type="ChEBI" id="CHEBI:140660"/>
        <dbReference type="EC" id="2.3.1.269"/>
    </reaction>
</comment>
<comment type="pathway">
    <text evidence="1">Protein modification; lipoprotein biosynthesis (N-acyl transfer).</text>
</comment>
<comment type="subcellular location">
    <subcellularLocation>
        <location evidence="1">Cell inner membrane</location>
        <topology evidence="1">Multi-pass membrane protein</topology>
    </subcellularLocation>
</comment>
<comment type="similarity">
    <text evidence="1">Belongs to the CN hydrolase family. Apolipoprotein N-acyltransferase subfamily.</text>
</comment>
<protein>
    <recommendedName>
        <fullName evidence="1">Apolipoprotein N-acyltransferase</fullName>
        <shortName evidence="1">ALP N-acyltransferase</shortName>
        <ecNumber evidence="1">2.3.1.269</ecNumber>
    </recommendedName>
</protein>
<organism>
    <name type="scientific">Pseudomonas paraeruginosa (strain DSM 24068 / PA7)</name>
    <name type="common">Pseudomonas aeruginosa (strain PA7)</name>
    <dbReference type="NCBI Taxonomy" id="381754"/>
    <lineage>
        <taxon>Bacteria</taxon>
        <taxon>Pseudomonadati</taxon>
        <taxon>Pseudomonadota</taxon>
        <taxon>Gammaproteobacteria</taxon>
        <taxon>Pseudomonadales</taxon>
        <taxon>Pseudomonadaceae</taxon>
        <taxon>Pseudomonas</taxon>
        <taxon>Pseudomonas paraeruginosa</taxon>
    </lineage>
</organism>
<name>LNT_PSEP7</name>
<accession>A6V0C5</accession>
<reference key="1">
    <citation type="submission" date="2007-06" db="EMBL/GenBank/DDBJ databases">
        <authorList>
            <person name="Dodson R.J."/>
            <person name="Harkins D."/>
            <person name="Paulsen I.T."/>
        </authorList>
    </citation>
    <scope>NUCLEOTIDE SEQUENCE [LARGE SCALE GENOMIC DNA]</scope>
    <source>
        <strain>DSM 24068 / PA7</strain>
    </source>
</reference>
<keyword id="KW-0012">Acyltransferase</keyword>
<keyword id="KW-0997">Cell inner membrane</keyword>
<keyword id="KW-1003">Cell membrane</keyword>
<keyword id="KW-0472">Membrane</keyword>
<keyword id="KW-0808">Transferase</keyword>
<keyword id="KW-0812">Transmembrane</keyword>
<keyword id="KW-1133">Transmembrane helix</keyword>
<proteinExistence type="inferred from homology"/>
<evidence type="ECO:0000255" key="1">
    <source>
        <dbReference type="HAMAP-Rule" id="MF_01148"/>
    </source>
</evidence>
<sequence length="511" mass="55967">MRWISRPGWPGHLLALAAGALTPLALAPFDYWPLAILSIALLYLGLRGLPARAALWRGWWYGFGAFGAGTSWIYVSIHDYGAASVPLASFLMLGFTAGVAFFFALPAWLWARCLRRDNAPLGDALAFAALWLALELFRSWFLTGFPWLYAGYSQLQGPLAGLVPVGGVWLSSFVIALSAALLVNLPRLFPHGASLLLALVLLLGPWAAGLYLKGHAWTHSAGEPLKVVAIQGNIAQELKWDPTQVRAQLDLYRDLSLPQQDVDLIVWPETAVPILKDMASGYLGAMGQVAADKKAALITGVPVRERLADGNSRYFNGITVVGEGAGTYLKQKLVPFGEYVPLQDLLRGLIAFFDLPMSDFARGPADQALLKAKGYEIAPYICYEVVYPEFAAALAAQSQVLLTVSNDTWFGTSIGPLQHLQMAQMRALESGRWMIRATNNGVTGLIDPYGRIVKQIPQFQQGILRGEVIPMQGLTPYLQYRVWPLAGLAGVLLLWALLGRRLRPQERRLFG</sequence>
<feature type="chain" id="PRO_1000085091" description="Apolipoprotein N-acyltransferase">
    <location>
        <begin position="1"/>
        <end position="511"/>
    </location>
</feature>
<feature type="transmembrane region" description="Helical" evidence="1">
    <location>
        <begin position="7"/>
        <end position="25"/>
    </location>
</feature>
<feature type="transmembrane region" description="Helical" evidence="1">
    <location>
        <begin position="58"/>
        <end position="78"/>
    </location>
</feature>
<feature type="transmembrane region" description="Helical" evidence="1">
    <location>
        <begin position="90"/>
        <end position="110"/>
    </location>
</feature>
<feature type="transmembrane region" description="Helical" evidence="1">
    <location>
        <begin position="125"/>
        <end position="145"/>
    </location>
</feature>
<feature type="transmembrane region" description="Helical" evidence="1">
    <location>
        <begin position="163"/>
        <end position="183"/>
    </location>
</feature>
<feature type="transmembrane region" description="Helical" evidence="1">
    <location>
        <begin position="192"/>
        <end position="212"/>
    </location>
</feature>
<feature type="transmembrane region" description="Helical" evidence="1">
    <location>
        <begin position="478"/>
        <end position="498"/>
    </location>
</feature>
<feature type="domain" description="CN hydrolase" evidence="1">
    <location>
        <begin position="230"/>
        <end position="470"/>
    </location>
</feature>
<feature type="active site" description="Proton acceptor" evidence="1">
    <location>
        <position position="269"/>
    </location>
</feature>
<feature type="active site" evidence="1">
    <location>
        <position position="330"/>
    </location>
</feature>
<feature type="active site" description="Nucleophile" evidence="1">
    <location>
        <position position="382"/>
    </location>
</feature>
<dbReference type="EC" id="2.3.1.269" evidence="1"/>
<dbReference type="EMBL" id="CP000744">
    <property type="protein sequence ID" value="ABR85730.1"/>
    <property type="molecule type" value="Genomic_DNA"/>
</dbReference>
<dbReference type="RefSeq" id="WP_003157109.1">
    <property type="nucleotide sequence ID" value="NC_009656.1"/>
</dbReference>
<dbReference type="SMR" id="A6V0C5"/>
<dbReference type="KEGG" id="pap:PSPA7_1124"/>
<dbReference type="HOGENOM" id="CLU_019563_3_0_6"/>
<dbReference type="UniPathway" id="UPA00666"/>
<dbReference type="Proteomes" id="UP000001582">
    <property type="component" value="Chromosome"/>
</dbReference>
<dbReference type="GO" id="GO:0005886">
    <property type="term" value="C:plasma membrane"/>
    <property type="evidence" value="ECO:0007669"/>
    <property type="project" value="UniProtKB-SubCell"/>
</dbReference>
<dbReference type="GO" id="GO:0016410">
    <property type="term" value="F:N-acyltransferase activity"/>
    <property type="evidence" value="ECO:0007669"/>
    <property type="project" value="UniProtKB-UniRule"/>
</dbReference>
<dbReference type="GO" id="GO:0042158">
    <property type="term" value="P:lipoprotein biosynthetic process"/>
    <property type="evidence" value="ECO:0007669"/>
    <property type="project" value="UniProtKB-UniRule"/>
</dbReference>
<dbReference type="CDD" id="cd07571">
    <property type="entry name" value="ALP_N-acyl_transferase"/>
    <property type="match status" value="1"/>
</dbReference>
<dbReference type="Gene3D" id="3.60.110.10">
    <property type="entry name" value="Carbon-nitrogen hydrolase"/>
    <property type="match status" value="1"/>
</dbReference>
<dbReference type="HAMAP" id="MF_01148">
    <property type="entry name" value="Lnt"/>
    <property type="match status" value="1"/>
</dbReference>
<dbReference type="InterPro" id="IPR004563">
    <property type="entry name" value="Apolipo_AcylTrfase"/>
</dbReference>
<dbReference type="InterPro" id="IPR003010">
    <property type="entry name" value="C-N_Hydrolase"/>
</dbReference>
<dbReference type="InterPro" id="IPR036526">
    <property type="entry name" value="C-N_Hydrolase_sf"/>
</dbReference>
<dbReference type="InterPro" id="IPR045378">
    <property type="entry name" value="LNT_N"/>
</dbReference>
<dbReference type="NCBIfam" id="TIGR00546">
    <property type="entry name" value="lnt"/>
    <property type="match status" value="1"/>
</dbReference>
<dbReference type="PANTHER" id="PTHR38686">
    <property type="entry name" value="APOLIPOPROTEIN N-ACYLTRANSFERASE"/>
    <property type="match status" value="1"/>
</dbReference>
<dbReference type="PANTHER" id="PTHR38686:SF1">
    <property type="entry name" value="APOLIPOPROTEIN N-ACYLTRANSFERASE"/>
    <property type="match status" value="1"/>
</dbReference>
<dbReference type="Pfam" id="PF00795">
    <property type="entry name" value="CN_hydrolase"/>
    <property type="match status" value="1"/>
</dbReference>
<dbReference type="Pfam" id="PF20154">
    <property type="entry name" value="LNT_N"/>
    <property type="match status" value="1"/>
</dbReference>
<dbReference type="SUPFAM" id="SSF56317">
    <property type="entry name" value="Carbon-nitrogen hydrolase"/>
    <property type="match status" value="1"/>
</dbReference>
<dbReference type="PROSITE" id="PS50263">
    <property type="entry name" value="CN_HYDROLASE"/>
    <property type="match status" value="1"/>
</dbReference>
<gene>
    <name evidence="1" type="primary">lnt</name>
    <name type="ordered locus">PSPA7_1124</name>
</gene>